<evidence type="ECO:0000250" key="1"/>
<evidence type="ECO:0000269" key="2">
    <source>
    </source>
</evidence>
<evidence type="ECO:0000305" key="3"/>
<evidence type="ECO:0007829" key="4">
    <source>
        <dbReference type="PDB" id="2DU3"/>
    </source>
</evidence>
<evidence type="ECO:0007829" key="5">
    <source>
        <dbReference type="PDB" id="2DU4"/>
    </source>
</evidence>
<reference key="1">
    <citation type="journal article" date="1997" name="Nature">
        <title>The complete genome sequence of the hyperthermophilic, sulphate-reducing archaeon Archaeoglobus fulgidus.</title>
        <authorList>
            <person name="Klenk H.-P."/>
            <person name="Clayton R.A."/>
            <person name="Tomb J.-F."/>
            <person name="White O."/>
            <person name="Nelson K.E."/>
            <person name="Ketchum K.A."/>
            <person name="Dodson R.J."/>
            <person name="Gwinn M.L."/>
            <person name="Hickey E.K."/>
            <person name="Peterson J.D."/>
            <person name="Richardson D.L."/>
            <person name="Kerlavage A.R."/>
            <person name="Graham D.E."/>
            <person name="Kyrpides N.C."/>
            <person name="Fleischmann R.D."/>
            <person name="Quackenbush J."/>
            <person name="Lee N.H."/>
            <person name="Sutton G.G."/>
            <person name="Gill S.R."/>
            <person name="Kirkness E.F."/>
            <person name="Dougherty B.A."/>
            <person name="McKenney K."/>
            <person name="Adams M.D."/>
            <person name="Loftus B.J."/>
            <person name="Peterson S.N."/>
            <person name="Reich C.I."/>
            <person name="McNeil L.K."/>
            <person name="Badger J.H."/>
            <person name="Glodek A."/>
            <person name="Zhou L."/>
            <person name="Overbeek R."/>
            <person name="Gocayne J.D."/>
            <person name="Weidman J.F."/>
            <person name="McDonald L.A."/>
            <person name="Utterback T.R."/>
            <person name="Cotton M.D."/>
            <person name="Spriggs T."/>
            <person name="Artiach P."/>
            <person name="Kaine B.P."/>
            <person name="Sykes S.M."/>
            <person name="Sadow P.W."/>
            <person name="D'Andrea K.P."/>
            <person name="Bowman C."/>
            <person name="Fujii C."/>
            <person name="Garland S.A."/>
            <person name="Mason T.M."/>
            <person name="Olsen G.J."/>
            <person name="Fraser C.M."/>
            <person name="Smith H.O."/>
            <person name="Woese C.R."/>
            <person name="Venter J.C."/>
        </authorList>
    </citation>
    <scope>NUCLEOTIDE SEQUENCE [LARGE SCALE GENOMIC DNA]</scope>
    <source>
        <strain>ATCC 49558 / DSM 4304 / JCM 9628 / NBRC 100126 / VC-16</strain>
    </source>
</reference>
<reference key="2">
    <citation type="journal article" date="2007" name="Nat. Struct. Mol. Biol.">
        <title>Structural insights into the first step of RNA-dependent cysteine biosynthesis in archaea.</title>
        <authorList>
            <person name="Fukunaga R."/>
            <person name="Yokoyama S."/>
        </authorList>
    </citation>
    <scope>X-RAY CRYSTALLOGRAPHY (2.6 ANGSTROMS) IN COMPLEX WITH SUBSTRATE</scope>
    <scope>MUTAGENESIS OF GLU-418; GLU-420 AND THR-423</scope>
    <scope>SUBUNIT</scope>
</reference>
<dbReference type="EC" id="6.1.1.27"/>
<dbReference type="EMBL" id="AE000782">
    <property type="protein sequence ID" value="AAB91121.1"/>
    <property type="molecule type" value="Genomic_DNA"/>
</dbReference>
<dbReference type="PIR" id="F69263">
    <property type="entry name" value="F69263"/>
</dbReference>
<dbReference type="RefSeq" id="WP_010877624.1">
    <property type="nucleotide sequence ID" value="NC_000917.1"/>
</dbReference>
<dbReference type="PDB" id="2DU3">
    <property type="method" value="X-ray"/>
    <property type="resolution" value="2.60 A"/>
    <property type="chains" value="A/B=1-534"/>
</dbReference>
<dbReference type="PDB" id="2DU4">
    <property type="method" value="X-ray"/>
    <property type="resolution" value="2.80 A"/>
    <property type="chains" value="A/B=1-534"/>
</dbReference>
<dbReference type="PDB" id="2DU5">
    <property type="method" value="X-ray"/>
    <property type="resolution" value="3.20 A"/>
    <property type="chains" value="A/B=1-534"/>
</dbReference>
<dbReference type="PDB" id="2DU6">
    <property type="method" value="X-ray"/>
    <property type="resolution" value="3.30 A"/>
    <property type="chains" value="A/B=1-534"/>
</dbReference>
<dbReference type="PDBsum" id="2DU3"/>
<dbReference type="PDBsum" id="2DU4"/>
<dbReference type="PDBsum" id="2DU5"/>
<dbReference type="PDBsum" id="2DU6"/>
<dbReference type="SMR" id="O30126"/>
<dbReference type="STRING" id="224325.AF_0110"/>
<dbReference type="PaxDb" id="224325-AF_0110"/>
<dbReference type="EnsemblBacteria" id="AAB91121">
    <property type="protein sequence ID" value="AAB91121"/>
    <property type="gene ID" value="AF_0110"/>
</dbReference>
<dbReference type="GeneID" id="24793664"/>
<dbReference type="KEGG" id="afu:AF_0110"/>
<dbReference type="eggNOG" id="arCOG00411">
    <property type="taxonomic scope" value="Archaea"/>
</dbReference>
<dbReference type="HOGENOM" id="CLU_506822_0_0_2"/>
<dbReference type="OrthoDB" id="145125at2157"/>
<dbReference type="PhylomeDB" id="O30126"/>
<dbReference type="BRENDA" id="6.1.1.27">
    <property type="organism ID" value="414"/>
</dbReference>
<dbReference type="EvolutionaryTrace" id="O30126"/>
<dbReference type="Proteomes" id="UP000002199">
    <property type="component" value="Chromosome"/>
</dbReference>
<dbReference type="GO" id="GO:0005524">
    <property type="term" value="F:ATP binding"/>
    <property type="evidence" value="ECO:0007669"/>
    <property type="project" value="UniProtKB-UniRule"/>
</dbReference>
<dbReference type="GO" id="GO:0042802">
    <property type="term" value="F:identical protein binding"/>
    <property type="evidence" value="ECO:0000353"/>
    <property type="project" value="IntAct"/>
</dbReference>
<dbReference type="GO" id="GO:0043816">
    <property type="term" value="F:phosphoserine-tRNA(Cys) ligase activity"/>
    <property type="evidence" value="ECO:0007669"/>
    <property type="project" value="UniProtKB-EC"/>
</dbReference>
<dbReference type="GO" id="GO:0000049">
    <property type="term" value="F:tRNA binding"/>
    <property type="evidence" value="ECO:0007669"/>
    <property type="project" value="InterPro"/>
</dbReference>
<dbReference type="GO" id="GO:0006412">
    <property type="term" value="P:translation"/>
    <property type="evidence" value="ECO:0007669"/>
    <property type="project" value="UniProtKB-KW"/>
</dbReference>
<dbReference type="GO" id="GO:0043039">
    <property type="term" value="P:tRNA aminoacylation"/>
    <property type="evidence" value="ECO:0007669"/>
    <property type="project" value="UniProtKB-UniRule"/>
</dbReference>
<dbReference type="FunFam" id="3.30.930.10:FF:000139">
    <property type="entry name" value="O-phosphoserine--tRNA(Cys) ligase"/>
    <property type="match status" value="1"/>
</dbReference>
<dbReference type="Gene3D" id="6.20.250.20">
    <property type="match status" value="1"/>
</dbReference>
<dbReference type="Gene3D" id="3.30.930.10">
    <property type="entry name" value="Bira Bifunctional Protein, Domain 2"/>
    <property type="match status" value="1"/>
</dbReference>
<dbReference type="HAMAP" id="MF_01674">
    <property type="entry name" value="Sep_tRNA_synth"/>
    <property type="match status" value="1"/>
</dbReference>
<dbReference type="InterPro" id="IPR006195">
    <property type="entry name" value="aa-tRNA-synth_II"/>
</dbReference>
<dbReference type="InterPro" id="IPR045864">
    <property type="entry name" value="aa-tRNA-synth_II/BPL/LPL"/>
</dbReference>
<dbReference type="InterPro" id="IPR005246">
    <property type="entry name" value="O-Pseryl-tRNA(Cys)_ligase"/>
</dbReference>
<dbReference type="InterPro" id="IPR002319">
    <property type="entry name" value="Phenylalanyl-tRNA_Synthase"/>
</dbReference>
<dbReference type="InterPro" id="IPR041590">
    <property type="entry name" value="SepRS_C"/>
</dbReference>
<dbReference type="NCBIfam" id="TIGR00470">
    <property type="entry name" value="sepS"/>
    <property type="match status" value="1"/>
</dbReference>
<dbReference type="Pfam" id="PF18006">
    <property type="entry name" value="SepRS_C"/>
    <property type="match status" value="1"/>
</dbReference>
<dbReference type="Pfam" id="PF01409">
    <property type="entry name" value="tRNA-synt_2d"/>
    <property type="match status" value="1"/>
</dbReference>
<dbReference type="SUPFAM" id="SSF55681">
    <property type="entry name" value="Class II aaRS and biotin synthetases"/>
    <property type="match status" value="1"/>
</dbReference>
<dbReference type="PROSITE" id="PS50862">
    <property type="entry name" value="AA_TRNA_LIGASE_II"/>
    <property type="match status" value="1"/>
</dbReference>
<accession>O30126</accession>
<proteinExistence type="evidence at protein level"/>
<sequence length="534" mass="61181">MKFDPQKYRELAEKDFEAAWKAGKEILAERSPNELYPRVGFSFGKEHPLFATIQRLREAYLSIGFSEVVNPLIVEDVHVKKQFGREALAVLDRCFYLATLPKPNVGISAEKIRQIEAITKREVDSKPLQEIFHRYKKGEIDGDDLSYLIAEVLDVDDITAVKILDEVFPEFKELKPISSTLTLRSHMTTGWFITLSHIADKLPLPIKLFSIDRCFRREQGEDATRLYTYFSASCVLVDEELSVDDGKAVAEALLRQFGFENFRFRKDEKRSKYYIPDTQTEVFAFHPKLVGSSTKYSDGWIEIATFGIYSPTALAEYDIPYPVMNLGLGVERLAMILYGYDDVRKMVYPQIHGEIKLSDLDIAREIKVKEVPQTAVGLKIAQSIVETAEKHASEPSPCSFLAFEGEMMGRNVRVYVVEEEENTKLCGPAYANEVVVYKGDIYGIPKTKKWRSFFEEGVPTGIRYIDGFAYYAARKVEEAAMREQEEVKVKARIVENLSDINLYIHENVRRYILWKKGKIDVRGPLFVTVKAEIE</sequence>
<feature type="chain" id="PRO_0000363746" description="O-phosphoserine--tRNA(Cys) ligase">
    <location>
        <begin position="1"/>
        <end position="534"/>
    </location>
</feature>
<feature type="binding site">
    <location>
        <begin position="186"/>
        <end position="188"/>
    </location>
    <ligand>
        <name>substrate</name>
    </ligand>
</feature>
<feature type="binding site">
    <location>
        <begin position="231"/>
        <end position="233"/>
    </location>
    <ligand>
        <name>substrate</name>
    </ligand>
</feature>
<feature type="binding site">
    <location>
        <begin position="273"/>
        <end position="274"/>
    </location>
    <ligand>
        <name>substrate</name>
    </ligand>
</feature>
<feature type="binding site" evidence="2">
    <location>
        <position position="325"/>
    </location>
    <ligand>
        <name>substrate</name>
    </ligand>
</feature>
<feature type="mutagenesis site" description="Shows reduced phosphoserine ligation activity. Shows appreciable ligation activity with both suppressor tRNA(Opal) and tRNA(Amber), and reduces ligation activity with tRNA(Cys); when associated with N-420. Shows higher activity than the E418N/E420N mutant with both suppressor tRNA(Opal) and tRNA(Amber), and the activity with tRNA(Opal) and tRNA(Amber) is almost 30% of that of the wild-type SepRS with tRNA(Cys); when associated with N-420 and V-423." evidence="2">
    <original>E</original>
    <variation>N</variation>
    <location>
        <position position="418"/>
    </location>
</feature>
<feature type="mutagenesis site" description="Shows reduced phosphoserine ligation activity. Shows appreciable ligation activity with both suppressor tRNA(Opal) and tRNA(Amber), and reduces ligation activity with tRNA(Cys); when associated with N-418. Shows higher activity than the E418N/E420N mutant with both suppressor tRNA(Opal) and tRNA(Amber), and the activity with tRNA(Opal) and tRNA(Amber) is almost 30% of that of the wild-type SepRS with tRNA(Cys); when associated with N-418 and V-423." evidence="2">
    <original>E</original>
    <variation>N</variation>
    <location>
        <position position="420"/>
    </location>
</feature>
<feature type="mutagenesis site" description="Shows higher activity than the E418N/E420N mutant with both suppressor tRNA(Opal) and tRNA(Amber), and the activity with tRNA(Opal) and tRNA(Amber) is almost 30% of that of the wild-type SepRS with tRNA(Cys); when associated with N-418 and N-420." evidence="2">
    <original>T</original>
    <variation>V</variation>
    <location>
        <position position="423"/>
    </location>
</feature>
<feature type="helix" evidence="4">
    <location>
        <begin position="5"/>
        <end position="14"/>
    </location>
</feature>
<feature type="helix" evidence="4">
    <location>
        <begin position="16"/>
        <end position="22"/>
    </location>
</feature>
<feature type="helix" evidence="4">
    <location>
        <begin position="23"/>
        <end position="26"/>
    </location>
</feature>
<feature type="helix" evidence="4">
    <location>
        <begin position="32"/>
        <end position="34"/>
    </location>
</feature>
<feature type="helix" evidence="4">
    <location>
        <begin position="48"/>
        <end position="62"/>
    </location>
</feature>
<feature type="strand" evidence="4">
    <location>
        <begin position="73"/>
        <end position="75"/>
    </location>
</feature>
<feature type="helix" evidence="4">
    <location>
        <begin position="77"/>
        <end position="83"/>
    </location>
</feature>
<feature type="helix" evidence="4">
    <location>
        <begin position="84"/>
        <end position="86"/>
    </location>
</feature>
<feature type="helix" evidence="4">
    <location>
        <begin position="87"/>
        <end position="91"/>
    </location>
</feature>
<feature type="strand" evidence="4">
    <location>
        <begin position="96"/>
        <end position="99"/>
    </location>
</feature>
<feature type="helix" evidence="4">
    <location>
        <begin position="107"/>
        <end position="109"/>
    </location>
</feature>
<feature type="turn" evidence="4">
    <location>
        <begin position="110"/>
        <end position="115"/>
    </location>
</feature>
<feature type="turn" evidence="4">
    <location>
        <begin position="128"/>
        <end position="133"/>
    </location>
</feature>
<feature type="helix" evidence="4">
    <location>
        <begin position="134"/>
        <end position="137"/>
    </location>
</feature>
<feature type="helix" evidence="4">
    <location>
        <begin position="142"/>
        <end position="144"/>
    </location>
</feature>
<feature type="turn" evidence="4">
    <location>
        <begin position="145"/>
        <end position="150"/>
    </location>
</feature>
<feature type="strand" evidence="4">
    <location>
        <begin position="151"/>
        <end position="153"/>
    </location>
</feature>
<feature type="helix" evidence="4">
    <location>
        <begin position="156"/>
        <end position="158"/>
    </location>
</feature>
<feature type="helix" evidence="4">
    <location>
        <begin position="160"/>
        <end position="165"/>
    </location>
</feature>
<feature type="turn" evidence="4">
    <location>
        <begin position="169"/>
        <end position="173"/>
    </location>
</feature>
<feature type="strand" evidence="4">
    <location>
        <begin position="177"/>
        <end position="183"/>
    </location>
</feature>
<feature type="helix" evidence="4">
    <location>
        <begin position="187"/>
        <end position="196"/>
    </location>
</feature>
<feature type="turn" evidence="4">
    <location>
        <begin position="197"/>
        <end position="201"/>
    </location>
</feature>
<feature type="strand" evidence="4">
    <location>
        <begin position="204"/>
        <end position="215"/>
    </location>
</feature>
<feature type="strand" evidence="4">
    <location>
        <begin position="222"/>
        <end position="224"/>
    </location>
</feature>
<feature type="strand" evidence="4">
    <location>
        <begin position="227"/>
        <end position="237"/>
    </location>
</feature>
<feature type="helix" evidence="4">
    <location>
        <begin position="243"/>
        <end position="254"/>
    </location>
</feature>
<feature type="helix" evidence="4">
    <location>
        <begin position="255"/>
        <end position="257"/>
    </location>
</feature>
<feature type="strand" evidence="4">
    <location>
        <begin position="261"/>
        <end position="266"/>
    </location>
</feature>
<feature type="turn" evidence="4">
    <location>
        <begin position="276"/>
        <end position="278"/>
    </location>
</feature>
<feature type="strand" evidence="4">
    <location>
        <begin position="280"/>
        <end position="290"/>
    </location>
</feature>
<feature type="strand" evidence="4">
    <location>
        <begin position="293"/>
        <end position="295"/>
    </location>
</feature>
<feature type="strand" evidence="4">
    <location>
        <begin position="298"/>
        <end position="309"/>
    </location>
</feature>
<feature type="helix" evidence="4">
    <location>
        <begin position="311"/>
        <end position="315"/>
    </location>
</feature>
<feature type="turn" evidence="4">
    <location>
        <begin position="316"/>
        <end position="318"/>
    </location>
</feature>
<feature type="strand" evidence="4">
    <location>
        <begin position="323"/>
        <end position="329"/>
    </location>
</feature>
<feature type="helix" evidence="4">
    <location>
        <begin position="330"/>
        <end position="337"/>
    </location>
</feature>
<feature type="helix" evidence="4">
    <location>
        <begin position="343"/>
        <end position="347"/>
    </location>
</feature>
<feature type="turn" evidence="4">
    <location>
        <begin position="349"/>
        <end position="353"/>
    </location>
</feature>
<feature type="helix" evidence="4">
    <location>
        <begin position="359"/>
        <end position="365"/>
    </location>
</feature>
<feature type="strand" evidence="4">
    <location>
        <begin position="367"/>
        <end position="370"/>
    </location>
</feature>
<feature type="helix" evidence="4">
    <location>
        <begin position="375"/>
        <end position="390"/>
    </location>
</feature>
<feature type="strand" evidence="4">
    <location>
        <begin position="391"/>
        <end position="393"/>
    </location>
</feature>
<feature type="strand" evidence="4">
    <location>
        <begin position="395"/>
        <end position="418"/>
    </location>
</feature>
<feature type="strand" evidence="4">
    <location>
        <begin position="420"/>
        <end position="426"/>
    </location>
</feature>
<feature type="turn" evidence="4">
    <location>
        <begin position="428"/>
        <end position="431"/>
    </location>
</feature>
<feature type="strand" evidence="4">
    <location>
        <begin position="433"/>
        <end position="437"/>
    </location>
</feature>
<feature type="strand" evidence="4">
    <location>
        <begin position="440"/>
        <end position="444"/>
    </location>
</feature>
<feature type="helix" evidence="4">
    <location>
        <begin position="448"/>
        <end position="450"/>
    </location>
</feature>
<feature type="helix" evidence="4">
    <location>
        <begin position="451"/>
        <end position="456"/>
    </location>
</feature>
<feature type="strand" evidence="4">
    <location>
        <begin position="457"/>
        <end position="463"/>
    </location>
</feature>
<feature type="helix" evidence="4">
    <location>
        <begin position="464"/>
        <end position="479"/>
    </location>
</feature>
<feature type="turn" evidence="4">
    <location>
        <begin position="480"/>
        <end position="483"/>
    </location>
</feature>
<feature type="strand" evidence="4">
    <location>
        <begin position="485"/>
        <end position="494"/>
    </location>
</feature>
<feature type="helix" evidence="4">
    <location>
        <begin position="497"/>
        <end position="500"/>
    </location>
</feature>
<feature type="strand" evidence="5">
    <location>
        <begin position="502"/>
        <end position="504"/>
    </location>
</feature>
<feature type="helix" evidence="4">
    <location>
        <begin position="506"/>
        <end position="514"/>
    </location>
</feature>
<feature type="strand" evidence="4">
    <location>
        <begin position="523"/>
        <end position="533"/>
    </location>
</feature>
<organism>
    <name type="scientific">Archaeoglobus fulgidus (strain ATCC 49558 / DSM 4304 / JCM 9628 / NBRC 100126 / VC-16)</name>
    <dbReference type="NCBI Taxonomy" id="224325"/>
    <lineage>
        <taxon>Archaea</taxon>
        <taxon>Methanobacteriati</taxon>
        <taxon>Methanobacteriota</taxon>
        <taxon>Archaeoglobi</taxon>
        <taxon>Archaeoglobales</taxon>
        <taxon>Archaeoglobaceae</taxon>
        <taxon>Archaeoglobus</taxon>
    </lineage>
</organism>
<name>SEPS_ARCFU</name>
<protein>
    <recommendedName>
        <fullName>O-phosphoserine--tRNA(Cys) ligase</fullName>
        <shortName>O-phosphoserine--tRNA ligase</shortName>
        <ecNumber>6.1.1.27</ecNumber>
    </recommendedName>
    <alternativeName>
        <fullName>Non-canonical O-phosphoseryl-tRNA(Cys) synthetase</fullName>
    </alternativeName>
    <alternativeName>
        <fullName>O-phosphoseryl-tRNA(Cys) synthetase</fullName>
        <shortName>SepRS</shortName>
    </alternativeName>
</protein>
<comment type="function">
    <text evidence="3">Catalyzes the attachment of O-phosphoserine (Sep) to tRNA(Cys).</text>
</comment>
<comment type="catalytic activity">
    <reaction>
        <text>tRNA(Cys) + O-phospho-L-serine + ATP = O-phospho-L-seryl-tRNA(Cys) + AMP + diphosphate</text>
        <dbReference type="Rhea" id="RHEA:25678"/>
        <dbReference type="Rhea" id="RHEA-COMP:9661"/>
        <dbReference type="Rhea" id="RHEA-COMP:9719"/>
        <dbReference type="ChEBI" id="CHEBI:30616"/>
        <dbReference type="ChEBI" id="CHEBI:33019"/>
        <dbReference type="ChEBI" id="CHEBI:57524"/>
        <dbReference type="ChEBI" id="CHEBI:78442"/>
        <dbReference type="ChEBI" id="CHEBI:78551"/>
        <dbReference type="ChEBI" id="CHEBI:456215"/>
        <dbReference type="EC" id="6.1.1.27"/>
    </reaction>
</comment>
<comment type="subunit">
    <text evidence="1">Homotetramer. Interacts with SepCysS (By similarity).</text>
</comment>
<comment type="interaction">
    <interactant intactId="EBI-15624845">
        <id>O30126</id>
    </interactant>
    <interactant intactId="EBI-15624845">
        <id>O30126</id>
        <label>sepS</label>
    </interactant>
    <organismsDiffer>false</organismsDiffer>
    <experiments>2</experiments>
</comment>
<comment type="similarity">
    <text evidence="3">Belongs to the class-II aminoacyl-tRNA synthetase family. O-phosphoseryl-tRNA(Cys) synthetase subfamily.</text>
</comment>
<keyword id="KW-0002">3D-structure</keyword>
<keyword id="KW-0030">Aminoacyl-tRNA synthetase</keyword>
<keyword id="KW-0067">ATP-binding</keyword>
<keyword id="KW-0436">Ligase</keyword>
<keyword id="KW-0547">Nucleotide-binding</keyword>
<keyword id="KW-0648">Protein biosynthesis</keyword>
<keyword id="KW-1185">Reference proteome</keyword>
<gene>
    <name type="primary">sepS</name>
    <name type="ordered locus">AF_0110</name>
</gene>